<reference key="1">
    <citation type="journal article" date="2011" name="J. Bacteriol.">
        <title>Comparative genomics of 28 Salmonella enterica isolates: evidence for CRISPR-mediated adaptive sublineage evolution.</title>
        <authorList>
            <person name="Fricke W.F."/>
            <person name="Mammel M.K."/>
            <person name="McDermott P.F."/>
            <person name="Tartera C."/>
            <person name="White D.G."/>
            <person name="Leclerc J.E."/>
            <person name="Ravel J."/>
            <person name="Cebula T.A."/>
        </authorList>
    </citation>
    <scope>NUCLEOTIDE SEQUENCE [LARGE SCALE GENOMIC DNA]</scope>
    <source>
        <strain>SL476</strain>
    </source>
</reference>
<dbReference type="EC" id="4.1.1.11" evidence="1"/>
<dbReference type="EMBL" id="CP001120">
    <property type="protein sequence ID" value="ACF67092.1"/>
    <property type="molecule type" value="Genomic_DNA"/>
</dbReference>
<dbReference type="RefSeq" id="WP_000621526.1">
    <property type="nucleotide sequence ID" value="NC_011083.1"/>
</dbReference>
<dbReference type="SMR" id="B4TK03"/>
<dbReference type="GeneID" id="89550440"/>
<dbReference type="KEGG" id="seh:SeHA_C0212"/>
<dbReference type="HOGENOM" id="CLU_115305_2_1_6"/>
<dbReference type="UniPathway" id="UPA00028">
    <property type="reaction ID" value="UER00002"/>
</dbReference>
<dbReference type="Proteomes" id="UP000001866">
    <property type="component" value="Chromosome"/>
</dbReference>
<dbReference type="GO" id="GO:0005829">
    <property type="term" value="C:cytosol"/>
    <property type="evidence" value="ECO:0007669"/>
    <property type="project" value="TreeGrafter"/>
</dbReference>
<dbReference type="GO" id="GO:0004068">
    <property type="term" value="F:aspartate 1-decarboxylase activity"/>
    <property type="evidence" value="ECO:0007669"/>
    <property type="project" value="UniProtKB-UniRule"/>
</dbReference>
<dbReference type="GO" id="GO:0006523">
    <property type="term" value="P:alanine biosynthetic process"/>
    <property type="evidence" value="ECO:0007669"/>
    <property type="project" value="InterPro"/>
</dbReference>
<dbReference type="GO" id="GO:0015940">
    <property type="term" value="P:pantothenate biosynthetic process"/>
    <property type="evidence" value="ECO:0007669"/>
    <property type="project" value="UniProtKB-UniRule"/>
</dbReference>
<dbReference type="CDD" id="cd06919">
    <property type="entry name" value="Asp_decarbox"/>
    <property type="match status" value="1"/>
</dbReference>
<dbReference type="FunFam" id="2.40.40.20:FF:000004">
    <property type="entry name" value="Aspartate 1-decarboxylase"/>
    <property type="match status" value="1"/>
</dbReference>
<dbReference type="Gene3D" id="2.40.40.20">
    <property type="match status" value="1"/>
</dbReference>
<dbReference type="HAMAP" id="MF_00446">
    <property type="entry name" value="PanD"/>
    <property type="match status" value="1"/>
</dbReference>
<dbReference type="InterPro" id="IPR009010">
    <property type="entry name" value="Asp_de-COase-like_dom_sf"/>
</dbReference>
<dbReference type="InterPro" id="IPR003190">
    <property type="entry name" value="Asp_decarbox"/>
</dbReference>
<dbReference type="NCBIfam" id="TIGR00223">
    <property type="entry name" value="panD"/>
    <property type="match status" value="1"/>
</dbReference>
<dbReference type="PANTHER" id="PTHR21012">
    <property type="entry name" value="ASPARTATE 1-DECARBOXYLASE"/>
    <property type="match status" value="1"/>
</dbReference>
<dbReference type="PANTHER" id="PTHR21012:SF0">
    <property type="entry name" value="ASPARTATE 1-DECARBOXYLASE"/>
    <property type="match status" value="1"/>
</dbReference>
<dbReference type="Pfam" id="PF02261">
    <property type="entry name" value="Asp_decarbox"/>
    <property type="match status" value="1"/>
</dbReference>
<dbReference type="PIRSF" id="PIRSF006246">
    <property type="entry name" value="Asp_decarbox"/>
    <property type="match status" value="1"/>
</dbReference>
<dbReference type="SUPFAM" id="SSF50692">
    <property type="entry name" value="ADC-like"/>
    <property type="match status" value="1"/>
</dbReference>
<feature type="chain" id="PRO_1000192031" description="Aspartate 1-decarboxylase beta chain" evidence="1">
    <location>
        <begin position="1"/>
        <end position="24"/>
    </location>
</feature>
<feature type="chain" id="PRO_1000192032" description="Aspartate 1-decarboxylase alpha chain" evidence="1">
    <location>
        <begin position="25"/>
        <end position="126"/>
    </location>
</feature>
<feature type="active site" description="Schiff-base intermediate with substrate; via pyruvic acid" evidence="1">
    <location>
        <position position="25"/>
    </location>
</feature>
<feature type="active site" description="Proton donor" evidence="1">
    <location>
        <position position="58"/>
    </location>
</feature>
<feature type="binding site" evidence="1">
    <location>
        <position position="57"/>
    </location>
    <ligand>
        <name>substrate</name>
    </ligand>
</feature>
<feature type="binding site" evidence="1">
    <location>
        <begin position="73"/>
        <end position="75"/>
    </location>
    <ligand>
        <name>substrate</name>
    </ligand>
</feature>
<feature type="modified residue" description="Pyruvic acid (Ser)" evidence="1">
    <location>
        <position position="25"/>
    </location>
</feature>
<evidence type="ECO:0000255" key="1">
    <source>
        <dbReference type="HAMAP-Rule" id="MF_00446"/>
    </source>
</evidence>
<keyword id="KW-0068">Autocatalytic cleavage</keyword>
<keyword id="KW-0963">Cytoplasm</keyword>
<keyword id="KW-0210">Decarboxylase</keyword>
<keyword id="KW-0456">Lyase</keyword>
<keyword id="KW-0566">Pantothenate biosynthesis</keyword>
<keyword id="KW-0670">Pyruvate</keyword>
<keyword id="KW-0704">Schiff base</keyword>
<keyword id="KW-0865">Zymogen</keyword>
<name>PAND_SALHS</name>
<organism>
    <name type="scientific">Salmonella heidelberg (strain SL476)</name>
    <dbReference type="NCBI Taxonomy" id="454169"/>
    <lineage>
        <taxon>Bacteria</taxon>
        <taxon>Pseudomonadati</taxon>
        <taxon>Pseudomonadota</taxon>
        <taxon>Gammaproteobacteria</taxon>
        <taxon>Enterobacterales</taxon>
        <taxon>Enterobacteriaceae</taxon>
        <taxon>Salmonella</taxon>
    </lineage>
</organism>
<accession>B4TK03</accession>
<sequence length="126" mass="13887">MIRTMLQGKLHRVKVTQADLHYEGSCAIDQDFLDASGILENEAIDIWNVTNGKRFSTYAIAAERGSRIISVNGAAAHCAEVGDIVIIASFVTMSDEEARTWRPKVAYFEGDNEMKRTAKAIPVQVA</sequence>
<comment type="function">
    <text evidence="1">Catalyzes the pyruvoyl-dependent decarboxylation of aspartate to produce beta-alanine.</text>
</comment>
<comment type="catalytic activity">
    <reaction evidence="1">
        <text>L-aspartate + H(+) = beta-alanine + CO2</text>
        <dbReference type="Rhea" id="RHEA:19497"/>
        <dbReference type="ChEBI" id="CHEBI:15378"/>
        <dbReference type="ChEBI" id="CHEBI:16526"/>
        <dbReference type="ChEBI" id="CHEBI:29991"/>
        <dbReference type="ChEBI" id="CHEBI:57966"/>
        <dbReference type="EC" id="4.1.1.11"/>
    </reaction>
</comment>
<comment type="cofactor">
    <cofactor evidence="1">
        <name>pyruvate</name>
        <dbReference type="ChEBI" id="CHEBI:15361"/>
    </cofactor>
    <text evidence="1">Binds 1 pyruvoyl group covalently per subunit.</text>
</comment>
<comment type="pathway">
    <text evidence="1">Cofactor biosynthesis; (R)-pantothenate biosynthesis; beta-alanine from L-aspartate: step 1/1.</text>
</comment>
<comment type="subunit">
    <text evidence="1">Heterooctamer of four alpha and four beta subunits.</text>
</comment>
<comment type="subcellular location">
    <subcellularLocation>
        <location evidence="1">Cytoplasm</location>
    </subcellularLocation>
</comment>
<comment type="PTM">
    <text evidence="1">Is synthesized initially as an inactive proenzyme, which is activated by self-cleavage at a specific serine bond to produce a beta-subunit with a hydroxyl group at its C-terminus and an alpha-subunit with a pyruvoyl group at its N-terminus.</text>
</comment>
<comment type="similarity">
    <text evidence="1">Belongs to the PanD family.</text>
</comment>
<proteinExistence type="inferred from homology"/>
<gene>
    <name evidence="1" type="primary">panD</name>
    <name type="ordered locus">SeHA_C0212</name>
</gene>
<protein>
    <recommendedName>
        <fullName evidence="1">Aspartate 1-decarboxylase</fullName>
        <ecNumber evidence="1">4.1.1.11</ecNumber>
    </recommendedName>
    <alternativeName>
        <fullName evidence="1">Aspartate alpha-decarboxylase</fullName>
    </alternativeName>
    <component>
        <recommendedName>
            <fullName evidence="1">Aspartate 1-decarboxylase beta chain</fullName>
        </recommendedName>
    </component>
    <component>
        <recommendedName>
            <fullName evidence="1">Aspartate 1-decarboxylase alpha chain</fullName>
        </recommendedName>
    </component>
</protein>